<comment type="function">
    <text evidence="2 3">Subunit delta, of the mitochondrial membrane ATP synthase complex (F(1)F(0) ATP synthase or Complex V) that produces ATP from ADP in the presence of a proton gradient across the membrane which is generated by electron transport complexes of the respiratory chain. ATP synthase complex consist of a soluble F(1) head domain - the catalytic core - and a membrane F(1) domain - the membrane proton channel. These two domains are linked by a central stalk rotating inside the F(1) region and a stationary peripheral stalk. During catalysis, ATP synthesis in the catalytic domain of F(1) is coupled via a rotary mechanism of the central stalk subunits to proton translocation (By similarity). In vivo, can only synthesize ATP although its ATP hydrolase activity can be activated artificially in vitro (By similarity). With the central stalk subunit gamma, is essential for the biogenesis of F(1) catalytic part of the ATP synthase complex namely in the formation of F1 assembly intermediate (By similarity).</text>
</comment>
<comment type="subunit">
    <text evidence="1 3 5">Component of the ATP synthase complex composed at least of ATP5F1A/subunit alpha, ATP5F1B/subunit beta, ATP5MC1/subunit c (homooctomer), MT-ATP6/subunit a, MT-ATP8/subunit 8, ATP5ME/subunit e, ATP5MF/subunit f, ATP5MG/subunit g, ATP5MK/subunit k, ATP5MJ/subunit j, ATP5F1C/subunit gamma, ATP5F1D/subunit delta, ATP5F1E/subunit epsilon, ATP5PF/subunit F6, ATP5PB/subunit b, ATP5PD/subunit d, ATP5PO/subunit OSCP (PubMed:17575325). ATP synthase complex consists of a soluble F(1) head domain (subunits alpha(3) and beta(3)) - the catalytic core - and a membrane F(0) domain - the membrane proton channel (subunits c, a, 8, e, f, g, k and j). These two domains are linked by a central stalk (subunits gamma, delta, and epsilon) rotating inside the F1 region and a stationary peripheral stalk (subunits F6, b, d, and OSCP) (By similarity). Component of a complex composed at least by ATPIF1, ATP5F1A, ATP5F1B, ATP5F1C AND ATP5F1E (By similarity).</text>
</comment>
<comment type="subcellular location">
    <subcellularLocation>
        <location>Mitochondrion</location>
    </subcellularLocation>
    <subcellularLocation>
        <location>Mitochondrion inner membrane</location>
    </subcellularLocation>
</comment>
<comment type="similarity">
    <text evidence="7">Belongs to the ATPase epsilon chain family.</text>
</comment>
<reference key="1">
    <citation type="submission" date="1993-08" db="EMBL/GenBank/DDBJ databases">
        <authorList>
            <person name="Pan W."/>
            <person name="Pedersen P.L."/>
        </authorList>
    </citation>
    <scope>NUCLEOTIDE SEQUENCE [MRNA]</scope>
    <source>
        <strain>Sprague-Dawley</strain>
        <tissue>Liver</tissue>
    </source>
</reference>
<reference key="2">
    <citation type="submission" date="1996-03" db="UniProtKB">
        <authorList>
            <person name="Dunn M.J."/>
        </authorList>
    </citation>
    <scope>PROTEIN SEQUENCE OF 23-35</scope>
    <source>
        <tissue>Heart</tissue>
    </source>
</reference>
<reference key="3">
    <citation type="submission" date="1991-02" db="PIR data bank">
        <authorList>
            <person name="Godinot C."/>
        </authorList>
    </citation>
    <scope>PRELIMINARY PROTEIN SEQUENCE OF 23-59</scope>
</reference>
<reference key="4">
    <citation type="submission" date="2007-07" db="UniProtKB">
        <authorList>
            <person name="Lubec G."/>
            <person name="Chen W.-Q."/>
            <person name="Kang S.U."/>
        </authorList>
    </citation>
    <scope>PROTEIN SEQUENCE OF 137-165</scope>
    <scope>IDENTIFICATION BY MASS SPECTROMETRY</scope>
    <source>
        <strain>Sprague-Dawley</strain>
        <tissue>Brain</tissue>
        <tissue>Hippocampus</tissue>
    </source>
</reference>
<reference key="5">
    <citation type="journal article" date="2007" name="Mol. Cell. Proteomics">
        <title>Identification of two proteins associated with mammalian ATP synthase.</title>
        <authorList>
            <person name="Meyer B."/>
            <person name="Wittig I."/>
            <person name="Trifilieff E."/>
            <person name="Karas M."/>
            <person name="Schaegger H."/>
        </authorList>
    </citation>
    <scope>IDENTIFICATION BY MASS SPECTROMETRY</scope>
    <scope>IDENTIFICATION IN THE ATP SYNTHASE COMPLEX</scope>
</reference>
<protein>
    <recommendedName>
        <fullName evidence="7">ATP synthase F(1) complex subunit delta, mitochondrial</fullName>
    </recommendedName>
    <alternativeName>
        <fullName evidence="8">ATP synthase F1 subunit delta</fullName>
    </alternativeName>
    <alternativeName>
        <fullName>F-ATPase delta subunit</fullName>
    </alternativeName>
</protein>
<dbReference type="EMBL" id="U00926">
    <property type="protein sequence ID" value="AAC28872.1"/>
    <property type="molecule type" value="mRNA"/>
</dbReference>
<dbReference type="PIR" id="B33160">
    <property type="entry name" value="B33160"/>
</dbReference>
<dbReference type="RefSeq" id="NP_620806.1">
    <property type="nucleotide sequence ID" value="NM_139106.1"/>
</dbReference>
<dbReference type="SMR" id="P35434"/>
<dbReference type="BioGRID" id="251461">
    <property type="interactions" value="2"/>
</dbReference>
<dbReference type="CORUM" id="P35434"/>
<dbReference type="FunCoup" id="P35434">
    <property type="interactions" value="2306"/>
</dbReference>
<dbReference type="IntAct" id="P35434">
    <property type="interactions" value="3"/>
</dbReference>
<dbReference type="MINT" id="P35434"/>
<dbReference type="STRING" id="10116.ENSRNOP00000020670"/>
<dbReference type="GlyGen" id="P35434">
    <property type="glycosylation" value="1 site, 1 O-linked glycan (1 site)"/>
</dbReference>
<dbReference type="iPTMnet" id="P35434"/>
<dbReference type="PhosphoSitePlus" id="P35434"/>
<dbReference type="jPOST" id="P35434"/>
<dbReference type="PaxDb" id="10116-ENSRNOP00000020670"/>
<dbReference type="GeneID" id="245965"/>
<dbReference type="KEGG" id="rno:245965"/>
<dbReference type="UCSC" id="RGD:621372">
    <property type="organism name" value="rat"/>
</dbReference>
<dbReference type="AGR" id="RGD:621372"/>
<dbReference type="CTD" id="513"/>
<dbReference type="RGD" id="621372">
    <property type="gene designation" value="Atp5f1d"/>
</dbReference>
<dbReference type="eggNOG" id="KOG1758">
    <property type="taxonomic scope" value="Eukaryota"/>
</dbReference>
<dbReference type="InParanoid" id="P35434"/>
<dbReference type="OrthoDB" id="270171at2759"/>
<dbReference type="PhylomeDB" id="P35434"/>
<dbReference type="Reactome" id="R-RNO-163210">
    <property type="pathway name" value="Formation of ATP by chemiosmotic coupling"/>
</dbReference>
<dbReference type="Reactome" id="R-RNO-8949613">
    <property type="pathway name" value="Cristae formation"/>
</dbReference>
<dbReference type="PRO" id="PR:P35434"/>
<dbReference type="Proteomes" id="UP000002494">
    <property type="component" value="Unplaced"/>
</dbReference>
<dbReference type="GO" id="GO:0005743">
    <property type="term" value="C:mitochondrial inner membrane"/>
    <property type="evidence" value="ECO:0000314"/>
    <property type="project" value="RGD"/>
</dbReference>
<dbReference type="GO" id="GO:0045259">
    <property type="term" value="C:proton-transporting ATP synthase complex"/>
    <property type="evidence" value="ECO:0000314"/>
    <property type="project" value="UniProtKB"/>
</dbReference>
<dbReference type="GO" id="GO:0044877">
    <property type="term" value="F:protein-containing complex binding"/>
    <property type="evidence" value="ECO:0000314"/>
    <property type="project" value="RGD"/>
</dbReference>
<dbReference type="GO" id="GO:0046933">
    <property type="term" value="F:proton-transporting ATP synthase activity, rotational mechanism"/>
    <property type="evidence" value="ECO:0007669"/>
    <property type="project" value="InterPro"/>
</dbReference>
<dbReference type="GO" id="GO:0005198">
    <property type="term" value="F:structural molecule activity"/>
    <property type="evidence" value="ECO:0000250"/>
    <property type="project" value="UniProtKB"/>
</dbReference>
<dbReference type="GO" id="GO:0009060">
    <property type="term" value="P:aerobic respiration"/>
    <property type="evidence" value="ECO:0000250"/>
    <property type="project" value="UniProtKB"/>
</dbReference>
<dbReference type="GO" id="GO:0033615">
    <property type="term" value="P:mitochondrial proton-transporting ATP synthase complex assembly"/>
    <property type="evidence" value="ECO:0000250"/>
    <property type="project" value="UniProtKB"/>
</dbReference>
<dbReference type="GO" id="GO:0015986">
    <property type="term" value="P:proton motive force-driven ATP synthesis"/>
    <property type="evidence" value="ECO:0000318"/>
    <property type="project" value="GO_Central"/>
</dbReference>
<dbReference type="GO" id="GO:0042776">
    <property type="term" value="P:proton motive force-driven mitochondrial ATP synthesis"/>
    <property type="evidence" value="ECO:0000266"/>
    <property type="project" value="RGD"/>
</dbReference>
<dbReference type="GO" id="GO:1904638">
    <property type="term" value="P:response to resveratrol"/>
    <property type="evidence" value="ECO:0000270"/>
    <property type="project" value="RGD"/>
</dbReference>
<dbReference type="CDD" id="cd12152">
    <property type="entry name" value="F1-ATPase_delta"/>
    <property type="match status" value="1"/>
</dbReference>
<dbReference type="FunFam" id="1.20.5.440:FF:000002">
    <property type="entry name" value="ATP synthase subunit delta, mitochondrial"/>
    <property type="match status" value="1"/>
</dbReference>
<dbReference type="FunFam" id="2.60.15.10:FF:000004">
    <property type="entry name" value="ATP synthase subunit delta, mitochondrial"/>
    <property type="match status" value="1"/>
</dbReference>
<dbReference type="Gene3D" id="1.20.5.440">
    <property type="entry name" value="ATP synthase delta/epsilon subunit, C-terminal domain"/>
    <property type="match status" value="1"/>
</dbReference>
<dbReference type="Gene3D" id="2.60.15.10">
    <property type="entry name" value="F0F1 ATP synthase delta/epsilon subunit, N-terminal"/>
    <property type="match status" value="1"/>
</dbReference>
<dbReference type="HAMAP" id="MF_00530">
    <property type="entry name" value="ATP_synth_epsil_bac"/>
    <property type="match status" value="1"/>
</dbReference>
<dbReference type="InterPro" id="IPR036794">
    <property type="entry name" value="ATP_F1_dsu/esu_C_sf"/>
</dbReference>
<dbReference type="InterPro" id="IPR001469">
    <property type="entry name" value="ATP_synth_F1_dsu/esu"/>
</dbReference>
<dbReference type="InterPro" id="IPR020546">
    <property type="entry name" value="ATP_synth_F1_dsu/esu_N"/>
</dbReference>
<dbReference type="InterPro" id="IPR048937">
    <property type="entry name" value="ATPD_C_metazoa"/>
</dbReference>
<dbReference type="InterPro" id="IPR036771">
    <property type="entry name" value="ATPsynth_dsu/esu_N"/>
</dbReference>
<dbReference type="NCBIfam" id="TIGR01216">
    <property type="entry name" value="ATP_synt_epsi"/>
    <property type="match status" value="1"/>
</dbReference>
<dbReference type="PANTHER" id="PTHR13822">
    <property type="entry name" value="ATP SYNTHASE DELTA/EPSILON CHAIN"/>
    <property type="match status" value="1"/>
</dbReference>
<dbReference type="PANTHER" id="PTHR13822:SF7">
    <property type="entry name" value="ATP SYNTHASE SUBUNIT DELTA, MITOCHONDRIAL"/>
    <property type="match status" value="1"/>
</dbReference>
<dbReference type="Pfam" id="PF02823">
    <property type="entry name" value="ATP-synt_DE_N"/>
    <property type="match status" value="1"/>
</dbReference>
<dbReference type="Pfam" id="PF21335">
    <property type="entry name" value="ATPD_C_metazoa"/>
    <property type="match status" value="1"/>
</dbReference>
<dbReference type="SUPFAM" id="SSF46604">
    <property type="entry name" value="Epsilon subunit of F1F0-ATP synthase C-terminal domain"/>
    <property type="match status" value="1"/>
</dbReference>
<dbReference type="SUPFAM" id="SSF51344">
    <property type="entry name" value="Epsilon subunit of F1F0-ATP synthase N-terminal domain"/>
    <property type="match status" value="1"/>
</dbReference>
<gene>
    <name evidence="8" type="primary">Atp5f1d</name>
    <name type="synonym">Atp5d</name>
</gene>
<sequence length="168" mass="17595">MLPAALLRHPGLRRLVLQARTYAQAAASPAPAAGPGQMSFTFASPTQVFFDGANVRQVDVPTLTGAFGILASHVPTLQVLRPGLVMVHAEDGTTTKYFVSSGSVTVNADSSVQLLAEEVVTLDMLDLGAARANLEKAQSELSGAADEAARAEIQIRIEANEALVKALE</sequence>
<keyword id="KW-0007">Acetylation</keyword>
<keyword id="KW-0066">ATP synthesis</keyword>
<keyword id="KW-0139">CF(1)</keyword>
<keyword id="KW-0903">Direct protein sequencing</keyword>
<keyword id="KW-0375">Hydrogen ion transport</keyword>
<keyword id="KW-0406">Ion transport</keyword>
<keyword id="KW-0472">Membrane</keyword>
<keyword id="KW-0496">Mitochondrion</keyword>
<keyword id="KW-0999">Mitochondrion inner membrane</keyword>
<keyword id="KW-1185">Reference proteome</keyword>
<keyword id="KW-0809">Transit peptide</keyword>
<keyword id="KW-0813">Transport</keyword>
<evidence type="ECO:0000250" key="1">
    <source>
        <dbReference type="UniProtKB" id="P05630"/>
    </source>
</evidence>
<evidence type="ECO:0000250" key="2">
    <source>
        <dbReference type="UniProtKB" id="P19483"/>
    </source>
</evidence>
<evidence type="ECO:0000250" key="3">
    <source>
        <dbReference type="UniProtKB" id="P30049"/>
    </source>
</evidence>
<evidence type="ECO:0000250" key="4">
    <source>
        <dbReference type="UniProtKB" id="Q9D3D9"/>
    </source>
</evidence>
<evidence type="ECO:0000269" key="5">
    <source>
    </source>
</evidence>
<evidence type="ECO:0000269" key="6">
    <source ref="2"/>
</evidence>
<evidence type="ECO:0000305" key="7"/>
<evidence type="ECO:0000312" key="8">
    <source>
        <dbReference type="RGD" id="621372"/>
    </source>
</evidence>
<name>ATPD_RAT</name>
<proteinExistence type="evidence at protein level"/>
<organism>
    <name type="scientific">Rattus norvegicus</name>
    <name type="common">Rat</name>
    <dbReference type="NCBI Taxonomy" id="10116"/>
    <lineage>
        <taxon>Eukaryota</taxon>
        <taxon>Metazoa</taxon>
        <taxon>Chordata</taxon>
        <taxon>Craniata</taxon>
        <taxon>Vertebrata</taxon>
        <taxon>Euteleostomi</taxon>
        <taxon>Mammalia</taxon>
        <taxon>Eutheria</taxon>
        <taxon>Euarchontoglires</taxon>
        <taxon>Glires</taxon>
        <taxon>Rodentia</taxon>
        <taxon>Myomorpha</taxon>
        <taxon>Muroidea</taxon>
        <taxon>Muridae</taxon>
        <taxon>Murinae</taxon>
        <taxon>Rattus</taxon>
    </lineage>
</organism>
<accession>P35434</accession>
<feature type="transit peptide" description="Mitochondrion" evidence="6">
    <location>
        <begin position="1"/>
        <end position="22"/>
    </location>
</feature>
<feature type="chain" id="PRO_0000002664" description="ATP synthase F(1) complex subunit delta, mitochondrial">
    <location>
        <begin position="23"/>
        <end position="168"/>
    </location>
</feature>
<feature type="modified residue" description="N6-acetyllysine; alternate" evidence="4">
    <location>
        <position position="136"/>
    </location>
</feature>
<feature type="modified residue" description="N6-succinyllysine; alternate" evidence="4">
    <location>
        <position position="136"/>
    </location>
</feature>
<feature type="modified residue" description="N6-acetyllysine; alternate" evidence="4">
    <location>
        <position position="165"/>
    </location>
</feature>
<feature type="modified residue" description="N6-succinyllysine; alternate" evidence="4">
    <location>
        <position position="165"/>
    </location>
</feature>
<feature type="sequence conflict" description="In Ref. 3; AA sequence." evidence="7" ref="3">
    <original>Q</original>
    <variation>E</variation>
    <location>
        <position position="24"/>
    </location>
</feature>
<feature type="sequence conflict" description="In Ref. 3; AA sequence." evidence="7" ref="3">
    <original>S</original>
    <variation>A</variation>
    <location>
        <position position="28"/>
    </location>
</feature>
<feature type="sequence conflict" description="In Ref. 3; AA sequence." evidence="7" ref="3">
    <original>P</original>
    <variation>S</variation>
    <location>
        <position position="31"/>
    </location>
</feature>
<feature type="sequence conflict" description="In Ref. 3; AA sequence." evidence="7" ref="3">
    <original>D</original>
    <variation>N</variation>
    <location>
        <position position="51"/>
    </location>
</feature>